<reference key="1">
    <citation type="journal article" date="1999" name="DNA Cell Biol.">
        <title>Maternal transcripts of mitotic checkpoint gene, Xbub3, are accumulated in the animal blastomeres of Xenopus early embryo.</title>
        <authorList>
            <person name="Goto T."/>
            <person name="Kinoshita T."/>
        </authorList>
    </citation>
    <scope>NUCLEOTIDE SEQUENCE [MRNA] (ISOFORM 1)</scope>
    <scope>DEVELOPMENTAL STAGE</scope>
    <source>
        <tissue>Embryo</tissue>
        <tissue>Oocyte</tissue>
    </source>
</reference>
<reference key="2">
    <citation type="journal article" date="2001" name="Curr. Biol.">
        <title>Bub1 is activated by the protein kinase p90(Rsk) during Xenopus oocyte maturation.</title>
        <authorList>
            <person name="Schwab M.S."/>
            <person name="Roberts B.T."/>
            <person name="Gross S.D."/>
            <person name="Tunquist B.J."/>
            <person name="Taieb F.E."/>
            <person name="Lewellyn A.L."/>
            <person name="Maller J.L."/>
        </authorList>
    </citation>
    <scope>NUCLEOTIDE SEQUENCE [MRNA] (ISOFORM 1)</scope>
    <scope>INTERACTION WITH BUB1</scope>
    <source>
        <tissue>Oocyte</tissue>
    </source>
</reference>
<reference key="3">
    <citation type="submission" date="2004-06" db="EMBL/GenBank/DDBJ databases">
        <authorList>
            <consortium name="NIH - Xenopus Gene Collection (XGC) project"/>
        </authorList>
    </citation>
    <scope>NUCLEOTIDE SEQUENCE [LARGE SCALE MRNA] (ISOFORM 2)</scope>
    <source>
        <tissue>Oocyte</tissue>
    </source>
</reference>
<reference key="4">
    <citation type="journal article" date="2002" name="J. Cell Biol.">
        <title>BubR1 is essential for kinetochore localization of other spindle checkpoint proteins and its phosphorylation requires Mad1.</title>
        <authorList>
            <person name="Chen R.H."/>
        </authorList>
    </citation>
    <scope>SUBCELLULAR LOCATION</scope>
    <scope>COMPLEX WITH BUB1B; MAD2 AND CDC20</scope>
</reference>
<reference key="5">
    <citation type="journal article" date="2003" name="J. Cell Sci.">
        <title>Analysis of Bub3 spindle checkpoint function in Xenopus egg extracts.</title>
        <authorList>
            <person name="Campbell L."/>
            <person name="Hardwick K.G."/>
        </authorList>
    </citation>
    <scope>FUNCTION</scope>
    <scope>INTERACTION WITH BUB1 AND BUB1B</scope>
    <scope>SUBCELLULAR LOCALIZATION</scope>
    <source>
        <tissue>Egg</tissue>
    </source>
</reference>
<reference key="6">
    <citation type="journal article" date="2004" name="Mol. Biol. Cell">
        <title>Kinetochore localization of spindle checkpoint proteins: who controls whom?</title>
        <authorList>
            <person name="Vigneron S."/>
            <person name="Prieto S."/>
            <person name="Bernis C."/>
            <person name="Labbe J.C."/>
            <person name="Castro A."/>
            <person name="Lorca T."/>
        </authorList>
    </citation>
    <scope>SUBCELLULAR LOCATION</scope>
</reference>
<reference key="7">
    <citation type="journal article" date="2014" name="Dev. Cell">
        <title>A microtubule-associated zinc finger protein, BuGZ, regulates mitotic chromosome alignment by ensuring Bub3 stability and kinetochore targeting.</title>
        <authorList>
            <person name="Jiang H."/>
            <person name="He X."/>
            <person name="Wang S."/>
            <person name="Jia J."/>
            <person name="Wan Y."/>
            <person name="Wang Y."/>
            <person name="Zeng R."/>
            <person name="Yates J. III"/>
            <person name="Zhu X."/>
            <person name="Zheng Y."/>
        </authorList>
    </citation>
    <scope>INTERACTION WITH ZNF207</scope>
</reference>
<accession>Q9YGY3</accession>
<accession>Q98UH2</accession>
<name>BUB3_XENLA</name>
<keyword id="KW-0025">Alternative splicing</keyword>
<keyword id="KW-0131">Cell cycle</keyword>
<keyword id="KW-0132">Cell division</keyword>
<keyword id="KW-0137">Centromere</keyword>
<keyword id="KW-0158">Chromosome</keyword>
<keyword id="KW-0159">Chromosome partition</keyword>
<keyword id="KW-0995">Kinetochore</keyword>
<keyword id="KW-0469">Meiosis</keyword>
<keyword id="KW-0498">Mitosis</keyword>
<keyword id="KW-0539">Nucleus</keyword>
<keyword id="KW-1185">Reference proteome</keyword>
<keyword id="KW-0677">Repeat</keyword>
<keyword id="KW-0853">WD repeat</keyword>
<organism>
    <name type="scientific">Xenopus laevis</name>
    <name type="common">African clawed frog</name>
    <dbReference type="NCBI Taxonomy" id="8355"/>
    <lineage>
        <taxon>Eukaryota</taxon>
        <taxon>Metazoa</taxon>
        <taxon>Chordata</taxon>
        <taxon>Craniata</taxon>
        <taxon>Vertebrata</taxon>
        <taxon>Euteleostomi</taxon>
        <taxon>Amphibia</taxon>
        <taxon>Batrachia</taxon>
        <taxon>Anura</taxon>
        <taxon>Pipoidea</taxon>
        <taxon>Pipidae</taxon>
        <taxon>Xenopodinae</taxon>
        <taxon>Xenopus</taxon>
        <taxon>Xenopus</taxon>
    </lineage>
</organism>
<proteinExistence type="evidence at protein level"/>
<sequence length="330" mass="37253">MNTQTDMTGSNEFKLNQAPEDGISAVKFSPNTSQFLLVSSWDSSVRLYDVPANTMRLKYQHAGPVLDCAFYDPTHAWSGGLDHQLKMHDLNTDGDTVVGSHDAPIRCVEYCPEVNVIVTGSWDQTVKLWDPRTPCNAGTFSQPDKVYTLSVSGDRLIVGTAGRRVLVWDLRNMGYVQQRRESSLKYQTRCIRAFPNKQGYVLSSIEGRVAVEYLDPSLEVQKKKYAFKCHRLKENNIEQIYPVNAVSFHNLHNTFATGGSDGFVNIWDPFNKKRLCQFHRYPTSIASLAFSNDGSTLAIAASYMYEMDDIDHPEDAIYIRQVTDAETKPK</sequence>
<evidence type="ECO:0000269" key="1">
    <source>
    </source>
</evidence>
<evidence type="ECO:0000269" key="2">
    <source>
    </source>
</evidence>
<evidence type="ECO:0000269" key="3">
    <source>
    </source>
</evidence>
<evidence type="ECO:0000269" key="4">
    <source>
    </source>
</evidence>
<evidence type="ECO:0000303" key="5">
    <source ref="3"/>
</evidence>
<evidence type="ECO:0000305" key="6"/>
<comment type="function">
    <text evidence="3">Has a dual function in spindle-assembly checkpoint signaling and in promoting the establishment of correct kinetochore-microtubule (K-MT) attachments. Plays a role in the kinetochore-mediated mitotic checkpoint, which delays anaphase onset until all chromosomes have attached properly to the mitotic spindle. Required to establish and maintain spindle checkpoint arrest in eggs.</text>
</comment>
<comment type="subunit">
    <text evidence="2 3 4">Found in complex with bub1 or bub1b (phosphorylated). Component of a complex along with bub1b, mad2 and cdc20 located at the kinetochore. Interacts with znf207/BuGZ.</text>
</comment>
<comment type="subcellular location">
    <subcellularLocation>
        <location>Nucleus</location>
    </subcellularLocation>
    <subcellularLocation>
        <location>Chromosome</location>
        <location>Centromere</location>
        <location>Kinetochore</location>
    </subcellularLocation>
    <text>Aurora B controls the kinetochore localization. Kinetochore localization starts in early prophase and maintains the localization until the metaphase-anaphase transition. Diffusively localized to the nucleus during interphase and telophase.</text>
</comment>
<comment type="alternative products">
    <event type="alternative splicing"/>
    <isoform>
        <id>Q9YGY3-1</id>
        <name>1</name>
        <sequence type="displayed"/>
    </isoform>
    <isoform>
        <id>Q9YGY3-2</id>
        <name>2</name>
        <sequence type="described" ref="VSP_044408"/>
    </isoform>
</comment>
<comment type="developmental stage">
    <text evidence="1">Maternal transcripts localize exclusively to animal blastomeres. Active expression (mRNA level) in whole oocytes during early stages (Dumont I-II). Transcripts accumulate in the animal half during the latest stages of oogenesis (Dumont IV-VI). Localized in the perinuclear cytoplasm in the full-grown oocyte. Close association with chromosome movement in dividing blastomeres. After gastrulation zygotic expression is observed in the whole ectodermal region, but enhanced in the dorsoanterior region. In the tadpole, expression is observed in the central nervous system, eyes and branchial arches.</text>
</comment>
<comment type="similarity">
    <text evidence="6">Belongs to the WD repeat BUB3 family.</text>
</comment>
<comment type="sequence caution" evidence="6">
    <conflict type="erroneous initiation">
        <sequence resource="EMBL-CDS" id="AAK12629"/>
    </conflict>
    <text>Truncated N-terminus.</text>
</comment>
<dbReference type="EMBL" id="AB018419">
    <property type="protein sequence ID" value="BAA34999.1"/>
    <property type="molecule type" value="mRNA"/>
</dbReference>
<dbReference type="EMBL" id="AF119790">
    <property type="protein sequence ID" value="AAK12629.1"/>
    <property type="status" value="ALT_INIT"/>
    <property type="molecule type" value="mRNA"/>
</dbReference>
<dbReference type="EMBL" id="BC073086">
    <property type="protein sequence ID" value="AAH73086.1"/>
    <property type="molecule type" value="mRNA"/>
</dbReference>
<dbReference type="RefSeq" id="NP_001083768.1">
    <molecule id="Q9YGY3-1"/>
    <property type="nucleotide sequence ID" value="NM_001090299.1"/>
</dbReference>
<dbReference type="SMR" id="Q9YGY3"/>
<dbReference type="BioGRID" id="100431">
    <property type="interactions" value="1"/>
</dbReference>
<dbReference type="IntAct" id="Q9YGY3">
    <property type="interactions" value="1"/>
</dbReference>
<dbReference type="DNASU" id="399106"/>
<dbReference type="GeneID" id="399106"/>
<dbReference type="KEGG" id="xla:399106"/>
<dbReference type="AGR" id="Xenbase:XB-GENE-955689"/>
<dbReference type="CTD" id="399106"/>
<dbReference type="Xenbase" id="XB-GENE-955689">
    <property type="gene designation" value="bub3.L"/>
</dbReference>
<dbReference type="OMA" id="WDSTLHI"/>
<dbReference type="OrthoDB" id="10262475at2759"/>
<dbReference type="PRO" id="PR:Q9YGY3"/>
<dbReference type="Proteomes" id="UP000186698">
    <property type="component" value="Chromosome 7L"/>
</dbReference>
<dbReference type="Bgee" id="399106">
    <property type="expression patterns" value="Expressed in gastrula and 19 other cell types or tissues"/>
</dbReference>
<dbReference type="GO" id="GO:1990298">
    <property type="term" value="C:bub1-bub3 complex"/>
    <property type="evidence" value="ECO:0000318"/>
    <property type="project" value="GO_Central"/>
</dbReference>
<dbReference type="GO" id="GO:0000776">
    <property type="term" value="C:kinetochore"/>
    <property type="evidence" value="ECO:0000250"/>
    <property type="project" value="UniProtKB"/>
</dbReference>
<dbReference type="GO" id="GO:0033597">
    <property type="term" value="C:mitotic checkpoint complex"/>
    <property type="evidence" value="ECO:0000318"/>
    <property type="project" value="GO_Central"/>
</dbReference>
<dbReference type="GO" id="GO:0005654">
    <property type="term" value="C:nucleoplasm"/>
    <property type="evidence" value="ECO:0000318"/>
    <property type="project" value="GO_Central"/>
</dbReference>
<dbReference type="GO" id="GO:0043130">
    <property type="term" value="F:ubiquitin binding"/>
    <property type="evidence" value="ECO:0000318"/>
    <property type="project" value="GO_Central"/>
</dbReference>
<dbReference type="GO" id="GO:0051301">
    <property type="term" value="P:cell division"/>
    <property type="evidence" value="ECO:0007669"/>
    <property type="project" value="UniProtKB-KW"/>
</dbReference>
<dbReference type="GO" id="GO:0007059">
    <property type="term" value="P:chromosome segregation"/>
    <property type="evidence" value="ECO:0007669"/>
    <property type="project" value="UniProtKB-KW"/>
</dbReference>
<dbReference type="GO" id="GO:0051321">
    <property type="term" value="P:meiotic cell cycle"/>
    <property type="evidence" value="ECO:0007669"/>
    <property type="project" value="UniProtKB-KW"/>
</dbReference>
<dbReference type="GO" id="GO:0007094">
    <property type="term" value="P:mitotic spindle assembly checkpoint signaling"/>
    <property type="evidence" value="ECO:0000318"/>
    <property type="project" value="GO_Central"/>
</dbReference>
<dbReference type="FunFam" id="2.130.10.10:FF:000047">
    <property type="entry name" value="Mitotic checkpoint protein bub3, putative"/>
    <property type="match status" value="1"/>
</dbReference>
<dbReference type="Gene3D" id="2.130.10.10">
    <property type="entry name" value="YVTN repeat-like/Quinoprotein amine dehydrogenase"/>
    <property type="match status" value="1"/>
</dbReference>
<dbReference type="InterPro" id="IPR020472">
    <property type="entry name" value="G-protein_beta_WD-40_rep"/>
</dbReference>
<dbReference type="InterPro" id="IPR015943">
    <property type="entry name" value="WD40/YVTN_repeat-like_dom_sf"/>
</dbReference>
<dbReference type="InterPro" id="IPR036322">
    <property type="entry name" value="WD40_repeat_dom_sf"/>
</dbReference>
<dbReference type="InterPro" id="IPR001680">
    <property type="entry name" value="WD40_rpt"/>
</dbReference>
<dbReference type="PANTHER" id="PTHR10971">
    <property type="entry name" value="MRNA EXPORT FACTOR AND BUB3"/>
    <property type="match status" value="1"/>
</dbReference>
<dbReference type="Pfam" id="PF00400">
    <property type="entry name" value="WD40"/>
    <property type="match status" value="3"/>
</dbReference>
<dbReference type="PRINTS" id="PR00320">
    <property type="entry name" value="GPROTEINBRPT"/>
</dbReference>
<dbReference type="SMART" id="SM00320">
    <property type="entry name" value="WD40"/>
    <property type="match status" value="5"/>
</dbReference>
<dbReference type="SUPFAM" id="SSF50978">
    <property type="entry name" value="WD40 repeat-like"/>
    <property type="match status" value="1"/>
</dbReference>
<dbReference type="PROSITE" id="PS50082">
    <property type="entry name" value="WD_REPEATS_2"/>
    <property type="match status" value="3"/>
</dbReference>
<dbReference type="PROSITE" id="PS50294">
    <property type="entry name" value="WD_REPEATS_REGION"/>
    <property type="match status" value="2"/>
</dbReference>
<protein>
    <recommendedName>
        <fullName>Mitotic checkpoint protein BUB3</fullName>
        <shortName>xbub3</shortName>
    </recommendedName>
    <alternativeName>
        <fullName>WD repeat protein Bub3</fullName>
    </alternativeName>
</protein>
<gene>
    <name type="primary">bub3</name>
</gene>
<feature type="chain" id="PRO_0000420122" description="Mitotic checkpoint protein BUB3">
    <location>
        <begin position="1"/>
        <end position="330"/>
    </location>
</feature>
<feature type="repeat" description="WD 1">
    <location>
        <begin position="8"/>
        <end position="49"/>
    </location>
</feature>
<feature type="repeat" description="WD 2">
    <location>
        <begin position="52"/>
        <end position="89"/>
    </location>
</feature>
<feature type="repeat" description="WD 3">
    <location>
        <begin position="91"/>
        <end position="130"/>
    </location>
</feature>
<feature type="repeat" description="WD 4">
    <location>
        <begin position="133"/>
        <end position="169"/>
    </location>
</feature>
<feature type="repeat" description="WD 5">
    <location>
        <begin position="220"/>
        <end position="268"/>
    </location>
</feature>
<feature type="splice variant" id="VSP_044408" description="In isoform 2." evidence="5">
    <location>
        <begin position="1"/>
        <end position="6"/>
    </location>
</feature>